<sequence length="44" mass="5050">MKRTFQPSNLVRARRHGFRARMATKGGRLVLNARRAKGRKKLSA</sequence>
<feature type="chain" id="PRO_1000196095" description="Large ribosomal subunit protein bL34">
    <location>
        <begin position="1"/>
        <end position="44"/>
    </location>
</feature>
<gene>
    <name evidence="1" type="primary">rpmH</name>
    <name type="ordered locus">RSKD131_2453</name>
</gene>
<evidence type="ECO:0000255" key="1">
    <source>
        <dbReference type="HAMAP-Rule" id="MF_00391"/>
    </source>
</evidence>
<evidence type="ECO:0000305" key="2"/>
<accession>B9KNZ1</accession>
<keyword id="KW-0687">Ribonucleoprotein</keyword>
<keyword id="KW-0689">Ribosomal protein</keyword>
<comment type="similarity">
    <text evidence="1">Belongs to the bacterial ribosomal protein bL34 family.</text>
</comment>
<name>RL34_CERSK</name>
<protein>
    <recommendedName>
        <fullName evidence="1">Large ribosomal subunit protein bL34</fullName>
    </recommendedName>
    <alternativeName>
        <fullName evidence="2">50S ribosomal protein L34</fullName>
    </alternativeName>
</protein>
<dbReference type="EMBL" id="CP001150">
    <property type="protein sequence ID" value="ACM02313.1"/>
    <property type="molecule type" value="Genomic_DNA"/>
</dbReference>
<dbReference type="RefSeq" id="WP_002721419.1">
    <property type="nucleotide sequence ID" value="NC_011963.1"/>
</dbReference>
<dbReference type="SMR" id="B9KNZ1"/>
<dbReference type="GeneID" id="67447833"/>
<dbReference type="KEGG" id="rsk:RSKD131_2453"/>
<dbReference type="HOGENOM" id="CLU_129938_2_1_5"/>
<dbReference type="GO" id="GO:1990904">
    <property type="term" value="C:ribonucleoprotein complex"/>
    <property type="evidence" value="ECO:0007669"/>
    <property type="project" value="UniProtKB-KW"/>
</dbReference>
<dbReference type="GO" id="GO:0005840">
    <property type="term" value="C:ribosome"/>
    <property type="evidence" value="ECO:0007669"/>
    <property type="project" value="UniProtKB-KW"/>
</dbReference>
<dbReference type="GO" id="GO:0003735">
    <property type="term" value="F:structural constituent of ribosome"/>
    <property type="evidence" value="ECO:0007669"/>
    <property type="project" value="InterPro"/>
</dbReference>
<dbReference type="GO" id="GO:0006412">
    <property type="term" value="P:translation"/>
    <property type="evidence" value="ECO:0007669"/>
    <property type="project" value="UniProtKB-UniRule"/>
</dbReference>
<dbReference type="FunFam" id="1.10.287.3980:FF:000001">
    <property type="entry name" value="Mitochondrial ribosomal protein L34"/>
    <property type="match status" value="1"/>
</dbReference>
<dbReference type="Gene3D" id="1.10.287.3980">
    <property type="match status" value="1"/>
</dbReference>
<dbReference type="HAMAP" id="MF_00391">
    <property type="entry name" value="Ribosomal_bL34"/>
    <property type="match status" value="1"/>
</dbReference>
<dbReference type="InterPro" id="IPR000271">
    <property type="entry name" value="Ribosomal_bL34"/>
</dbReference>
<dbReference type="InterPro" id="IPR020939">
    <property type="entry name" value="Ribosomal_bL34_CS"/>
</dbReference>
<dbReference type="NCBIfam" id="TIGR01030">
    <property type="entry name" value="rpmH_bact"/>
    <property type="match status" value="1"/>
</dbReference>
<dbReference type="PANTHER" id="PTHR14503:SF4">
    <property type="entry name" value="LARGE RIBOSOMAL SUBUNIT PROTEIN BL34M"/>
    <property type="match status" value="1"/>
</dbReference>
<dbReference type="PANTHER" id="PTHR14503">
    <property type="entry name" value="MITOCHONDRIAL RIBOSOMAL PROTEIN 34 FAMILY MEMBER"/>
    <property type="match status" value="1"/>
</dbReference>
<dbReference type="Pfam" id="PF00468">
    <property type="entry name" value="Ribosomal_L34"/>
    <property type="match status" value="1"/>
</dbReference>
<dbReference type="PROSITE" id="PS00784">
    <property type="entry name" value="RIBOSOMAL_L34"/>
    <property type="match status" value="1"/>
</dbReference>
<reference key="1">
    <citation type="journal article" date="2009" name="J. Bacteriol.">
        <title>Complete genome sequence of Rhodobacter sphaeroides KD131.</title>
        <authorList>
            <person name="Lim S.-K."/>
            <person name="Kim S.J."/>
            <person name="Cha S.H."/>
            <person name="Oh Y.-K."/>
            <person name="Rhee H.-J."/>
            <person name="Kim M.-S."/>
            <person name="Lee J.K."/>
        </authorList>
    </citation>
    <scope>NUCLEOTIDE SEQUENCE [LARGE SCALE GENOMIC DNA]</scope>
    <source>
        <strain>KD131 / KCTC 12085</strain>
    </source>
</reference>
<organism>
    <name type="scientific">Cereibacter sphaeroides (strain KD131 / KCTC 12085)</name>
    <name type="common">Rhodobacter sphaeroides</name>
    <dbReference type="NCBI Taxonomy" id="557760"/>
    <lineage>
        <taxon>Bacteria</taxon>
        <taxon>Pseudomonadati</taxon>
        <taxon>Pseudomonadota</taxon>
        <taxon>Alphaproteobacteria</taxon>
        <taxon>Rhodobacterales</taxon>
        <taxon>Paracoccaceae</taxon>
        <taxon>Cereibacter</taxon>
    </lineage>
</organism>
<proteinExistence type="inferred from homology"/>